<feature type="chain" id="PRO_0000388653" description="Putative mediator of RNA polymerase II transcription subunit 14">
    <location>
        <begin position="1"/>
        <end position="1420"/>
    </location>
</feature>
<feature type="region of interest" description="Disordered" evidence="3">
    <location>
        <begin position="1"/>
        <end position="59"/>
    </location>
</feature>
<feature type="region of interest" description="Disordered" evidence="3">
    <location>
        <begin position="449"/>
        <end position="490"/>
    </location>
</feature>
<feature type="region of interest" description="Disordered" evidence="3">
    <location>
        <begin position="750"/>
        <end position="799"/>
    </location>
</feature>
<feature type="region of interest" description="Disordered" evidence="3">
    <location>
        <begin position="1389"/>
        <end position="1420"/>
    </location>
</feature>
<feature type="coiled-coil region" evidence="2">
    <location>
        <begin position="1"/>
        <end position="43"/>
    </location>
</feature>
<feature type="coiled-coil region" evidence="2">
    <location>
        <begin position="1382"/>
        <end position="1412"/>
    </location>
</feature>
<feature type="compositionally biased region" description="Low complexity" evidence="3">
    <location>
        <begin position="1"/>
        <end position="43"/>
    </location>
</feature>
<feature type="compositionally biased region" description="Low complexity" evidence="3">
    <location>
        <begin position="449"/>
        <end position="474"/>
    </location>
</feature>
<feature type="compositionally biased region" description="Polar residues" evidence="3">
    <location>
        <begin position="475"/>
        <end position="490"/>
    </location>
</feature>
<feature type="compositionally biased region" description="Low complexity" evidence="3">
    <location>
        <begin position="755"/>
        <end position="795"/>
    </location>
</feature>
<feature type="compositionally biased region" description="Low complexity" evidence="3">
    <location>
        <begin position="1389"/>
        <end position="1406"/>
    </location>
</feature>
<feature type="compositionally biased region" description="Polar residues" evidence="3">
    <location>
        <begin position="1407"/>
        <end position="1420"/>
    </location>
</feature>
<gene>
    <name type="primary">med14</name>
    <name type="ORF">DDB_G0291297</name>
</gene>
<reference key="1">
    <citation type="journal article" date="2005" name="Nature">
        <title>The genome of the social amoeba Dictyostelium discoideum.</title>
        <authorList>
            <person name="Eichinger L."/>
            <person name="Pachebat J.A."/>
            <person name="Gloeckner G."/>
            <person name="Rajandream M.A."/>
            <person name="Sucgang R."/>
            <person name="Berriman M."/>
            <person name="Song J."/>
            <person name="Olsen R."/>
            <person name="Szafranski K."/>
            <person name="Xu Q."/>
            <person name="Tunggal B."/>
            <person name="Kummerfeld S."/>
            <person name="Madera M."/>
            <person name="Konfortov B.A."/>
            <person name="Rivero F."/>
            <person name="Bankier A.T."/>
            <person name="Lehmann R."/>
            <person name="Hamlin N."/>
            <person name="Davies R."/>
            <person name="Gaudet P."/>
            <person name="Fey P."/>
            <person name="Pilcher K."/>
            <person name="Chen G."/>
            <person name="Saunders D."/>
            <person name="Sodergren E.J."/>
            <person name="Davis P."/>
            <person name="Kerhornou A."/>
            <person name="Nie X."/>
            <person name="Hall N."/>
            <person name="Anjard C."/>
            <person name="Hemphill L."/>
            <person name="Bason N."/>
            <person name="Farbrother P."/>
            <person name="Desany B."/>
            <person name="Just E."/>
            <person name="Morio T."/>
            <person name="Rost R."/>
            <person name="Churcher C.M."/>
            <person name="Cooper J."/>
            <person name="Haydock S."/>
            <person name="van Driessche N."/>
            <person name="Cronin A."/>
            <person name="Goodhead I."/>
            <person name="Muzny D.M."/>
            <person name="Mourier T."/>
            <person name="Pain A."/>
            <person name="Lu M."/>
            <person name="Harper D."/>
            <person name="Lindsay R."/>
            <person name="Hauser H."/>
            <person name="James K.D."/>
            <person name="Quiles M."/>
            <person name="Madan Babu M."/>
            <person name="Saito T."/>
            <person name="Buchrieser C."/>
            <person name="Wardroper A."/>
            <person name="Felder M."/>
            <person name="Thangavelu M."/>
            <person name="Johnson D."/>
            <person name="Knights A."/>
            <person name="Loulseged H."/>
            <person name="Mungall K.L."/>
            <person name="Oliver K."/>
            <person name="Price C."/>
            <person name="Quail M.A."/>
            <person name="Urushihara H."/>
            <person name="Hernandez J."/>
            <person name="Rabbinowitsch E."/>
            <person name="Steffen D."/>
            <person name="Sanders M."/>
            <person name="Ma J."/>
            <person name="Kohara Y."/>
            <person name="Sharp S."/>
            <person name="Simmonds M.N."/>
            <person name="Spiegler S."/>
            <person name="Tivey A."/>
            <person name="Sugano S."/>
            <person name="White B."/>
            <person name="Walker D."/>
            <person name="Woodward J.R."/>
            <person name="Winckler T."/>
            <person name="Tanaka Y."/>
            <person name="Shaulsky G."/>
            <person name="Schleicher M."/>
            <person name="Weinstock G.M."/>
            <person name="Rosenthal A."/>
            <person name="Cox E.C."/>
            <person name="Chisholm R.L."/>
            <person name="Gibbs R.A."/>
            <person name="Loomis W.F."/>
            <person name="Platzer M."/>
            <person name="Kay R.R."/>
            <person name="Williams J.G."/>
            <person name="Dear P.H."/>
            <person name="Noegel A.A."/>
            <person name="Barrell B.G."/>
            <person name="Kuspa A."/>
        </authorList>
    </citation>
    <scope>NUCLEOTIDE SEQUENCE [LARGE SCALE GENOMIC DNA]</scope>
    <source>
        <strain>AX4</strain>
    </source>
</reference>
<reference key="2">
    <citation type="journal article" date="2008" name="Nucleic Acids Res.">
        <title>Comparative genomics supports a deep evolutionary origin for the large, four-module transcriptional mediator complex.</title>
        <authorList>
            <person name="Bourbon H.-M."/>
        </authorList>
    </citation>
    <scope>NOMENCLATURE</scope>
</reference>
<organism>
    <name type="scientific">Dictyostelium discoideum</name>
    <name type="common">Social amoeba</name>
    <dbReference type="NCBI Taxonomy" id="44689"/>
    <lineage>
        <taxon>Eukaryota</taxon>
        <taxon>Amoebozoa</taxon>
        <taxon>Evosea</taxon>
        <taxon>Eumycetozoa</taxon>
        <taxon>Dictyostelia</taxon>
        <taxon>Dictyosteliales</taxon>
        <taxon>Dictyosteliaceae</taxon>
        <taxon>Dictyostelium</taxon>
    </lineage>
</organism>
<comment type="function">
    <text evidence="1">Component of the Mediator complex, a coactivator involved in the regulated transcription of nearly all RNA polymerase II-dependent genes. Mediator functions as a bridge to convey information from gene-specific regulatory proteins to the basal RNA polymerase II transcription machinery. Mediator is recruited to promoters by direct interactions with regulatory proteins and serves as a scaffold for the assembly of a functional preinitiation complex with RNA polymerase II and the general transcription factors (By similarity).</text>
</comment>
<comment type="subunit">
    <text evidence="1">Component of the Mediator complex.</text>
</comment>
<comment type="subcellular location">
    <subcellularLocation>
        <location evidence="1">Nucleus</location>
    </subcellularLocation>
</comment>
<comment type="similarity">
    <text evidence="4">Belongs to the Mediator complex subunit 14 family.</text>
</comment>
<name>MED14_DICDI</name>
<proteinExistence type="inferred from homology"/>
<protein>
    <recommendedName>
        <fullName>Putative mediator of RNA polymerase II transcription subunit 14</fullName>
    </recommendedName>
    <alternativeName>
        <fullName>Putative mediator complex subunit 14</fullName>
    </alternativeName>
</protein>
<accession>P0CB66</accession>
<accession>C7G072</accession>
<keyword id="KW-0010">Activator</keyword>
<keyword id="KW-0175">Coiled coil</keyword>
<keyword id="KW-0539">Nucleus</keyword>
<keyword id="KW-1185">Reference proteome</keyword>
<keyword id="KW-0804">Transcription</keyword>
<keyword id="KW-0805">Transcription regulation</keyword>
<evidence type="ECO:0000250" key="1"/>
<evidence type="ECO:0000255" key="2"/>
<evidence type="ECO:0000256" key="3">
    <source>
        <dbReference type="SAM" id="MobiDB-lite"/>
    </source>
</evidence>
<evidence type="ECO:0000305" key="4"/>
<sequence length="1420" mass="162896">MDQNQQQQQQQQQQQQQQQQQQQQQQQQQQQQQQQQQQQQQQQPPNGMMPMNGEQTTPIIPQNRNISLSLVIHRLVEQSYNSLLGLTEGLPKANDLERKKAIVDYLDGTREKFLRLMVLIKWSEHVPTLTKANNIIDILNLEDSYLREAADLLINTQFSLVNARAPIYDVPTAIDVLTTGTYQRMPTNIKRVIPPPPLKPTQIESALERLNDIIKYKLFISDVPKEFQPITVSDGKAHIFVDDEYEAYLTIDGGSEKSNWVILSLNLFVYSKRNLNGEGPIKVAYDNKMKYVLDRVQNRIISSAQPLFELHNIVHYLCISSQMDILASQVENLKKTILKNNIRCVFGKDQSITVFYWLPEDFNLVGVTQHTLGNLMPNKHTNFKIYIDEHQKIKISHYPPITHPKNENYFKIASLNLETILLQAIELNAYDKVYLLNSLLLDNRITANTTSSSSSSSSNNNNTASPIINRNNNNGKPNLLSTKQSNNPLSRSFHLNDIKLIMSSRFSDENQNDSNGNNDHLPTVLRVMLYGSKFLDITVNFQNGKFSLIKSSNYIEFTNHLEQRLNKDPNEIESIVNVFKLKSLLTCFEEASLFLGLECFNKIPLQMNSSNNSESNQLANELFSDSNFICVSISLAKENNPYYLVISIKATCFTPSFHLLFCKMLPKSTIMTLDSIIKLESDQLNKLLKECPIGSISSSNNTNSNGNGPFQSYISTLLEKIVEASNQKINLLSIQSFLKKENINYYQPSQQDIENNNNNNNNNNNNNNNNNNNNNNNNNNNNNNNNNNNNNNGNNGYKNNGITTTTSIVFLFNEQQIQKISPFLSNHISHQTPITISFKNGFYTLSFTQQRPFEYKKYGSGSNININSFGENNSNENYIYRKGNWIFKYQQTSDWFNSFCNDLMTISKITNISSQLLKQMETLEIYKQLITHLTIKPMSIEFVCFVGSNQTRTNVIMFVEKKTAEIKLSFQPYSNPLLVYLEKDINQSPTNDITNSLRAIINSNDISVYINSLISPLELSFYLPLEILVIPRSICQIRLLYKNLYGIDIKLISHEYCAISDSFYSLNSSKQVRLTSINQLHSFMEQRVSLQALDNPTGHRTSWLLPIKQFQKTISRIFIYLNSLNTLKFAQNLMKPNFQPLVPSNPSSQKFSNDYFIVSFSIRDYTSFDIDVTNKNLENSVPSNEELALFCQYFKKKVQQLNYRSQTIGSCIQMLTLPPKILWEFIRVLLEITGPKFDGYTIEISLNTSSIHSKNKESFFHIPDENQVYFILRYLNSSRTDIIPPDQFTDIPIIYNYNEKSIRYWNKLDSNSTSSSSSSTLPKKSLSIVEEVKQKFVEEVAKLIPDALNASSGKSSPISIFFKSFLPKIKPIFSNPTASTLLLIQQQQQQQQQQQQQQQQQQQQQQIENNNFASASSSIR</sequence>
<dbReference type="EMBL" id="AAFI02000177">
    <property type="protein sequence ID" value="EEU04048.1"/>
    <property type="molecule type" value="Genomic_DNA"/>
</dbReference>
<dbReference type="RefSeq" id="XP_002649100.1">
    <property type="nucleotide sequence ID" value="XM_002649054.1"/>
</dbReference>
<dbReference type="SMR" id="P0CB66"/>
<dbReference type="FunCoup" id="P0CB66">
    <property type="interactions" value="499"/>
</dbReference>
<dbReference type="STRING" id="44689.P0CB66"/>
<dbReference type="PaxDb" id="44689-DDB0266830"/>
<dbReference type="EnsemblProtists" id="EEU04048">
    <property type="protein sequence ID" value="EEU04048"/>
    <property type="gene ID" value="DDB_G0291297"/>
</dbReference>
<dbReference type="GeneID" id="8628070"/>
<dbReference type="KEGG" id="ddi:DDB_G0291297"/>
<dbReference type="dictyBase" id="DDB_G0291297">
    <property type="gene designation" value="med14"/>
</dbReference>
<dbReference type="VEuPathDB" id="AmoebaDB:DDB_G0291297"/>
<dbReference type="eggNOG" id="KOG1875">
    <property type="taxonomic scope" value="Eukaryota"/>
</dbReference>
<dbReference type="HOGENOM" id="CLU_253145_0_0_1"/>
<dbReference type="InParanoid" id="P0CB66"/>
<dbReference type="OMA" id="LISHEYC"/>
<dbReference type="PRO" id="PR:P0CB66"/>
<dbReference type="Proteomes" id="UP000002195">
    <property type="component" value="Chromosome 6"/>
</dbReference>
<dbReference type="GO" id="GO:0070847">
    <property type="term" value="C:core mediator complex"/>
    <property type="evidence" value="ECO:0000318"/>
    <property type="project" value="GO_Central"/>
</dbReference>
<dbReference type="GO" id="GO:0016592">
    <property type="term" value="C:mediator complex"/>
    <property type="evidence" value="ECO:0000250"/>
    <property type="project" value="dictyBase"/>
</dbReference>
<dbReference type="GO" id="GO:0003712">
    <property type="term" value="F:transcription coregulator activity"/>
    <property type="evidence" value="ECO:0000318"/>
    <property type="project" value="GO_Central"/>
</dbReference>
<dbReference type="GO" id="GO:0006357">
    <property type="term" value="P:regulation of transcription by RNA polymerase II"/>
    <property type="evidence" value="ECO:0000318"/>
    <property type="project" value="GO_Central"/>
</dbReference>
<dbReference type="InterPro" id="IPR055122">
    <property type="entry name" value="Med14_N"/>
</dbReference>
<dbReference type="InterPro" id="IPR013947">
    <property type="entry name" value="Mediator_Med14"/>
</dbReference>
<dbReference type="PANTHER" id="PTHR12809">
    <property type="entry name" value="MEDIATOR COMPLEX SUBUNIT"/>
    <property type="match status" value="1"/>
</dbReference>
<dbReference type="PANTHER" id="PTHR12809:SF2">
    <property type="entry name" value="MEDIATOR OF RNA POLYMERASE II TRANSCRIPTION SUBUNIT 14"/>
    <property type="match status" value="1"/>
</dbReference>
<dbReference type="Pfam" id="PF08638">
    <property type="entry name" value="Med14"/>
    <property type="match status" value="1"/>
</dbReference>
<dbReference type="SUPFAM" id="SSF81995">
    <property type="entry name" value="beta-sandwich domain of Sec23/24"/>
    <property type="match status" value="1"/>
</dbReference>